<organism>
    <name type="scientific">Thiobacillus denitrificans (strain ATCC 25259 / T1)</name>
    <dbReference type="NCBI Taxonomy" id="292415"/>
    <lineage>
        <taxon>Bacteria</taxon>
        <taxon>Pseudomonadati</taxon>
        <taxon>Pseudomonadota</taxon>
        <taxon>Betaproteobacteria</taxon>
        <taxon>Nitrosomonadales</taxon>
        <taxon>Thiobacillaceae</taxon>
        <taxon>Thiobacillus</taxon>
    </lineage>
</organism>
<reference key="1">
    <citation type="journal article" date="2006" name="J. Bacteriol.">
        <title>The genome sequence of the obligately chemolithoautotrophic, facultatively anaerobic bacterium Thiobacillus denitrificans.</title>
        <authorList>
            <person name="Beller H.R."/>
            <person name="Chain P.S."/>
            <person name="Letain T.E."/>
            <person name="Chakicherla A."/>
            <person name="Larimer F.W."/>
            <person name="Richardson P.M."/>
            <person name="Coleman M.A."/>
            <person name="Wood A.P."/>
            <person name="Kelly D.P."/>
        </authorList>
    </citation>
    <scope>NUCLEOTIDE SEQUENCE [LARGE SCALE GENOMIC DNA]</scope>
    <source>
        <strain>ATCC 25259 / T1</strain>
    </source>
</reference>
<sequence length="211" mass="21891">MRTFPGGVYALTRETPDTERLLAEVEAALAGGVAAVQYRDKSGDVAQRHAQASELAALCRRFGVPLIVNDDLRLADLAGADGVHLGRDDASIREARIILGPAKFVGASCYQSLDLARAAQTAGADYVAFGSFYPSPTKPAAARADVALLARASRHIALPVVAIGGITAANAAPLIDAGADSLAVLSALFDAPDVRRAAAELNRLFAAEPEE</sequence>
<protein>
    <recommendedName>
        <fullName evidence="1">Thiamine-phosphate synthase</fullName>
        <shortName evidence="1">TP synthase</shortName>
        <shortName evidence="1">TPS</shortName>
        <ecNumber evidence="1">2.5.1.3</ecNumber>
    </recommendedName>
    <alternativeName>
        <fullName evidence="1">Thiamine-phosphate pyrophosphorylase</fullName>
        <shortName evidence="1">TMP pyrophosphorylase</shortName>
        <shortName evidence="1">TMP-PPase</shortName>
    </alternativeName>
</protein>
<proteinExistence type="inferred from homology"/>
<keyword id="KW-0460">Magnesium</keyword>
<keyword id="KW-0479">Metal-binding</keyword>
<keyword id="KW-1185">Reference proteome</keyword>
<keyword id="KW-0784">Thiamine biosynthesis</keyword>
<keyword id="KW-0808">Transferase</keyword>
<dbReference type="EC" id="2.5.1.3" evidence="1"/>
<dbReference type="EMBL" id="CP000116">
    <property type="protein sequence ID" value="AAZ98509.1"/>
    <property type="molecule type" value="Genomic_DNA"/>
</dbReference>
<dbReference type="RefSeq" id="WP_011313068.1">
    <property type="nucleotide sequence ID" value="NC_007404.1"/>
</dbReference>
<dbReference type="SMR" id="Q3SFU7"/>
<dbReference type="STRING" id="292415.Tbd_2556"/>
<dbReference type="KEGG" id="tbd:Tbd_2556"/>
<dbReference type="eggNOG" id="COG0352">
    <property type="taxonomic scope" value="Bacteria"/>
</dbReference>
<dbReference type="HOGENOM" id="CLU_018272_3_1_4"/>
<dbReference type="OrthoDB" id="9810880at2"/>
<dbReference type="UniPathway" id="UPA00060">
    <property type="reaction ID" value="UER00141"/>
</dbReference>
<dbReference type="Proteomes" id="UP000008291">
    <property type="component" value="Chromosome"/>
</dbReference>
<dbReference type="GO" id="GO:0005737">
    <property type="term" value="C:cytoplasm"/>
    <property type="evidence" value="ECO:0007669"/>
    <property type="project" value="TreeGrafter"/>
</dbReference>
<dbReference type="GO" id="GO:0000287">
    <property type="term" value="F:magnesium ion binding"/>
    <property type="evidence" value="ECO:0007669"/>
    <property type="project" value="UniProtKB-UniRule"/>
</dbReference>
<dbReference type="GO" id="GO:0004789">
    <property type="term" value="F:thiamine-phosphate diphosphorylase activity"/>
    <property type="evidence" value="ECO:0007669"/>
    <property type="project" value="UniProtKB-UniRule"/>
</dbReference>
<dbReference type="GO" id="GO:0009228">
    <property type="term" value="P:thiamine biosynthetic process"/>
    <property type="evidence" value="ECO:0007669"/>
    <property type="project" value="UniProtKB-KW"/>
</dbReference>
<dbReference type="GO" id="GO:0009229">
    <property type="term" value="P:thiamine diphosphate biosynthetic process"/>
    <property type="evidence" value="ECO:0007669"/>
    <property type="project" value="UniProtKB-UniRule"/>
</dbReference>
<dbReference type="CDD" id="cd00564">
    <property type="entry name" value="TMP_TenI"/>
    <property type="match status" value="1"/>
</dbReference>
<dbReference type="Gene3D" id="3.20.20.70">
    <property type="entry name" value="Aldolase class I"/>
    <property type="match status" value="1"/>
</dbReference>
<dbReference type="HAMAP" id="MF_00097">
    <property type="entry name" value="TMP_synthase"/>
    <property type="match status" value="1"/>
</dbReference>
<dbReference type="InterPro" id="IPR013785">
    <property type="entry name" value="Aldolase_TIM"/>
</dbReference>
<dbReference type="InterPro" id="IPR036206">
    <property type="entry name" value="ThiamineP_synth_sf"/>
</dbReference>
<dbReference type="InterPro" id="IPR022998">
    <property type="entry name" value="ThiamineP_synth_TenI"/>
</dbReference>
<dbReference type="InterPro" id="IPR034291">
    <property type="entry name" value="TMP_synthase"/>
</dbReference>
<dbReference type="NCBIfam" id="TIGR00693">
    <property type="entry name" value="thiE"/>
    <property type="match status" value="1"/>
</dbReference>
<dbReference type="PANTHER" id="PTHR20857">
    <property type="entry name" value="THIAMINE-PHOSPHATE PYROPHOSPHORYLASE"/>
    <property type="match status" value="1"/>
</dbReference>
<dbReference type="PANTHER" id="PTHR20857:SF15">
    <property type="entry name" value="THIAMINE-PHOSPHATE SYNTHASE"/>
    <property type="match status" value="1"/>
</dbReference>
<dbReference type="Pfam" id="PF02581">
    <property type="entry name" value="TMP-TENI"/>
    <property type="match status" value="1"/>
</dbReference>
<dbReference type="SUPFAM" id="SSF51391">
    <property type="entry name" value="Thiamin phosphate synthase"/>
    <property type="match status" value="1"/>
</dbReference>
<evidence type="ECO:0000255" key="1">
    <source>
        <dbReference type="HAMAP-Rule" id="MF_00097"/>
    </source>
</evidence>
<comment type="function">
    <text evidence="1">Condenses 4-methyl-5-(beta-hydroxyethyl)thiazole monophosphate (THZ-P) and 2-methyl-4-amino-5-hydroxymethyl pyrimidine pyrophosphate (HMP-PP) to form thiamine monophosphate (TMP).</text>
</comment>
<comment type="catalytic activity">
    <reaction evidence="1">
        <text>2-[(2R,5Z)-2-carboxy-4-methylthiazol-5(2H)-ylidene]ethyl phosphate + 4-amino-2-methyl-5-(diphosphooxymethyl)pyrimidine + 2 H(+) = thiamine phosphate + CO2 + diphosphate</text>
        <dbReference type="Rhea" id="RHEA:47844"/>
        <dbReference type="ChEBI" id="CHEBI:15378"/>
        <dbReference type="ChEBI" id="CHEBI:16526"/>
        <dbReference type="ChEBI" id="CHEBI:33019"/>
        <dbReference type="ChEBI" id="CHEBI:37575"/>
        <dbReference type="ChEBI" id="CHEBI:57841"/>
        <dbReference type="ChEBI" id="CHEBI:62899"/>
        <dbReference type="EC" id="2.5.1.3"/>
    </reaction>
</comment>
<comment type="catalytic activity">
    <reaction evidence="1">
        <text>2-(2-carboxy-4-methylthiazol-5-yl)ethyl phosphate + 4-amino-2-methyl-5-(diphosphooxymethyl)pyrimidine + 2 H(+) = thiamine phosphate + CO2 + diphosphate</text>
        <dbReference type="Rhea" id="RHEA:47848"/>
        <dbReference type="ChEBI" id="CHEBI:15378"/>
        <dbReference type="ChEBI" id="CHEBI:16526"/>
        <dbReference type="ChEBI" id="CHEBI:33019"/>
        <dbReference type="ChEBI" id="CHEBI:37575"/>
        <dbReference type="ChEBI" id="CHEBI:57841"/>
        <dbReference type="ChEBI" id="CHEBI:62890"/>
        <dbReference type="EC" id="2.5.1.3"/>
    </reaction>
</comment>
<comment type="catalytic activity">
    <reaction evidence="1">
        <text>4-methyl-5-(2-phosphooxyethyl)-thiazole + 4-amino-2-methyl-5-(diphosphooxymethyl)pyrimidine + H(+) = thiamine phosphate + diphosphate</text>
        <dbReference type="Rhea" id="RHEA:22328"/>
        <dbReference type="ChEBI" id="CHEBI:15378"/>
        <dbReference type="ChEBI" id="CHEBI:33019"/>
        <dbReference type="ChEBI" id="CHEBI:37575"/>
        <dbReference type="ChEBI" id="CHEBI:57841"/>
        <dbReference type="ChEBI" id="CHEBI:58296"/>
        <dbReference type="EC" id="2.5.1.3"/>
    </reaction>
</comment>
<comment type="cofactor">
    <cofactor evidence="1">
        <name>Mg(2+)</name>
        <dbReference type="ChEBI" id="CHEBI:18420"/>
    </cofactor>
    <text evidence="1">Binds 1 Mg(2+) ion per subunit.</text>
</comment>
<comment type="pathway">
    <text evidence="1">Cofactor biosynthesis; thiamine diphosphate biosynthesis; thiamine phosphate from 4-amino-2-methyl-5-diphosphomethylpyrimidine and 4-methyl-5-(2-phosphoethyl)-thiazole: step 1/1.</text>
</comment>
<comment type="similarity">
    <text evidence="1">Belongs to the thiamine-phosphate synthase family.</text>
</comment>
<feature type="chain" id="PRO_1000008184" description="Thiamine-phosphate synthase">
    <location>
        <begin position="1"/>
        <end position="211"/>
    </location>
</feature>
<feature type="binding site" evidence="1">
    <location>
        <begin position="37"/>
        <end position="41"/>
    </location>
    <ligand>
        <name>4-amino-2-methyl-5-(diphosphooxymethyl)pyrimidine</name>
        <dbReference type="ChEBI" id="CHEBI:57841"/>
    </ligand>
</feature>
<feature type="binding site" evidence="1">
    <location>
        <position position="69"/>
    </location>
    <ligand>
        <name>4-amino-2-methyl-5-(diphosphooxymethyl)pyrimidine</name>
        <dbReference type="ChEBI" id="CHEBI:57841"/>
    </ligand>
</feature>
<feature type="binding site" evidence="1">
    <location>
        <position position="70"/>
    </location>
    <ligand>
        <name>Mg(2+)</name>
        <dbReference type="ChEBI" id="CHEBI:18420"/>
    </ligand>
</feature>
<feature type="binding site" evidence="1">
    <location>
        <position position="89"/>
    </location>
    <ligand>
        <name>Mg(2+)</name>
        <dbReference type="ChEBI" id="CHEBI:18420"/>
    </ligand>
</feature>
<feature type="binding site" evidence="1">
    <location>
        <position position="108"/>
    </location>
    <ligand>
        <name>4-amino-2-methyl-5-(diphosphooxymethyl)pyrimidine</name>
        <dbReference type="ChEBI" id="CHEBI:57841"/>
    </ligand>
</feature>
<feature type="binding site" evidence="1">
    <location>
        <begin position="135"/>
        <end position="137"/>
    </location>
    <ligand>
        <name>2-[(2R,5Z)-2-carboxy-4-methylthiazol-5(2H)-ylidene]ethyl phosphate</name>
        <dbReference type="ChEBI" id="CHEBI:62899"/>
    </ligand>
</feature>
<feature type="binding site" evidence="1">
    <location>
        <position position="138"/>
    </location>
    <ligand>
        <name>4-amino-2-methyl-5-(diphosphooxymethyl)pyrimidine</name>
        <dbReference type="ChEBI" id="CHEBI:57841"/>
    </ligand>
</feature>
<feature type="binding site" evidence="1">
    <location>
        <position position="165"/>
    </location>
    <ligand>
        <name>2-[(2R,5Z)-2-carboxy-4-methylthiazol-5(2H)-ylidene]ethyl phosphate</name>
        <dbReference type="ChEBI" id="CHEBI:62899"/>
    </ligand>
</feature>
<feature type="binding site" evidence="1">
    <location>
        <begin position="185"/>
        <end position="186"/>
    </location>
    <ligand>
        <name>2-[(2R,5Z)-2-carboxy-4-methylthiazol-5(2H)-ylidene]ethyl phosphate</name>
        <dbReference type="ChEBI" id="CHEBI:62899"/>
    </ligand>
</feature>
<accession>Q3SFU7</accession>
<name>THIE_THIDA</name>
<gene>
    <name evidence="1" type="primary">thiE</name>
    <name type="ordered locus">Tbd_2556</name>
</gene>